<organism>
    <name type="scientific">Homo sapiens</name>
    <name type="common">Human</name>
    <dbReference type="NCBI Taxonomy" id="9606"/>
    <lineage>
        <taxon>Eukaryota</taxon>
        <taxon>Metazoa</taxon>
        <taxon>Chordata</taxon>
        <taxon>Craniata</taxon>
        <taxon>Vertebrata</taxon>
        <taxon>Euteleostomi</taxon>
        <taxon>Mammalia</taxon>
        <taxon>Eutheria</taxon>
        <taxon>Euarchontoglires</taxon>
        <taxon>Primates</taxon>
        <taxon>Haplorrhini</taxon>
        <taxon>Catarrhini</taxon>
        <taxon>Hominidae</taxon>
        <taxon>Homo</taxon>
    </lineage>
</organism>
<dbReference type="EC" id="2.7.10.1"/>
<dbReference type="EMBL" id="U08023">
    <property type="protein sequence ID" value="AAB60430.1"/>
    <property type="molecule type" value="mRNA"/>
</dbReference>
<dbReference type="EMBL" id="AH010001">
    <property type="protein sequence ID" value="AAG33129.1"/>
    <property type="molecule type" value="Genomic_DNA"/>
</dbReference>
<dbReference type="EMBL" id="AC093675">
    <property type="status" value="NOT_ANNOTATED_CDS"/>
    <property type="molecule type" value="Genomic_DNA"/>
</dbReference>
<dbReference type="EMBL" id="AC104651">
    <property type="status" value="NOT_ANNOTATED_CDS"/>
    <property type="molecule type" value="Genomic_DNA"/>
</dbReference>
<dbReference type="CCDS" id="CCDS2094.1"/>
<dbReference type="PIR" id="I38547">
    <property type="entry name" value="I38547"/>
</dbReference>
<dbReference type="RefSeq" id="NP_006334.2">
    <property type="nucleotide sequence ID" value="NM_006343.3"/>
</dbReference>
<dbReference type="PDB" id="2DBJ">
    <property type="method" value="NMR"/>
    <property type="chains" value="A=373-483"/>
</dbReference>
<dbReference type="PDB" id="2P0C">
    <property type="method" value="X-ray"/>
    <property type="resolution" value="2.40 A"/>
    <property type="chains" value="A/B=570-864"/>
</dbReference>
<dbReference type="PDB" id="3BPR">
    <property type="method" value="X-ray"/>
    <property type="resolution" value="2.80 A"/>
    <property type="chains" value="A/B/C/D=570-864"/>
</dbReference>
<dbReference type="PDB" id="3BRB">
    <property type="method" value="X-ray"/>
    <property type="resolution" value="1.90 A"/>
    <property type="chains" value="A/B=570-864"/>
</dbReference>
<dbReference type="PDB" id="3TCP">
    <property type="method" value="X-ray"/>
    <property type="resolution" value="2.69 A"/>
    <property type="chains" value="A/B=570-864"/>
</dbReference>
<dbReference type="PDB" id="4M3Q">
    <property type="method" value="X-ray"/>
    <property type="resolution" value="2.72 A"/>
    <property type="chains" value="A/B=570-864"/>
</dbReference>
<dbReference type="PDB" id="4MH7">
    <property type="method" value="X-ray"/>
    <property type="resolution" value="2.51 A"/>
    <property type="chains" value="A/B=570-864"/>
</dbReference>
<dbReference type="PDB" id="4MHA">
    <property type="method" value="X-ray"/>
    <property type="resolution" value="2.59 A"/>
    <property type="chains" value="A/B=570-864"/>
</dbReference>
<dbReference type="PDB" id="5K0K">
    <property type="method" value="X-ray"/>
    <property type="resolution" value="2.54 A"/>
    <property type="chains" value="A/B=570-864"/>
</dbReference>
<dbReference type="PDB" id="5K0X">
    <property type="method" value="X-ray"/>
    <property type="resolution" value="2.23 A"/>
    <property type="chains" value="A/B=570-864"/>
</dbReference>
<dbReference type="PDB" id="5TC0">
    <property type="method" value="X-ray"/>
    <property type="resolution" value="2.24 A"/>
    <property type="chains" value="A/B=570-864"/>
</dbReference>
<dbReference type="PDB" id="5TD2">
    <property type="method" value="X-ray"/>
    <property type="resolution" value="2.68 A"/>
    <property type="chains" value="A/B=577-861"/>
</dbReference>
<dbReference type="PDB" id="5U6C">
    <property type="method" value="X-ray"/>
    <property type="resolution" value="2.10 A"/>
    <property type="chains" value="A/B=570-864"/>
</dbReference>
<dbReference type="PDB" id="6MEP">
    <property type="method" value="X-ray"/>
    <property type="resolution" value="2.89 A"/>
    <property type="chains" value="A/B=570-864"/>
</dbReference>
<dbReference type="PDB" id="7AAX">
    <property type="method" value="X-ray"/>
    <property type="resolution" value="1.76 A"/>
    <property type="chains" value="A=571-864"/>
</dbReference>
<dbReference type="PDB" id="7AAY">
    <property type="method" value="X-ray"/>
    <property type="resolution" value="1.87 A"/>
    <property type="chains" value="A=571-864"/>
</dbReference>
<dbReference type="PDB" id="7AAZ">
    <property type="method" value="X-ray"/>
    <property type="resolution" value="1.85 A"/>
    <property type="chains" value="A=570-864"/>
</dbReference>
<dbReference type="PDB" id="7AB0">
    <property type="method" value="X-ray"/>
    <property type="resolution" value="1.74 A"/>
    <property type="chains" value="A=571-864"/>
</dbReference>
<dbReference type="PDB" id="7AB1">
    <property type="method" value="X-ray"/>
    <property type="resolution" value="1.93 A"/>
    <property type="chains" value="A=571-864"/>
</dbReference>
<dbReference type="PDB" id="7AB2">
    <property type="method" value="X-ray"/>
    <property type="resolution" value="1.78 A"/>
    <property type="chains" value="A=571-864"/>
</dbReference>
<dbReference type="PDB" id="7AVX">
    <property type="method" value="X-ray"/>
    <property type="resolution" value="2.44 A"/>
    <property type="chains" value="A/B=570-864"/>
</dbReference>
<dbReference type="PDB" id="7AVY">
    <property type="method" value="X-ray"/>
    <property type="resolution" value="2.31 A"/>
    <property type="chains" value="A=570-864"/>
</dbReference>
<dbReference type="PDB" id="7AVZ">
    <property type="method" value="X-ray"/>
    <property type="resolution" value="2.04 A"/>
    <property type="chains" value="A=571-864"/>
</dbReference>
<dbReference type="PDB" id="7AW0">
    <property type="method" value="X-ray"/>
    <property type="resolution" value="1.89 A"/>
    <property type="chains" value="A=571-864"/>
</dbReference>
<dbReference type="PDB" id="7AW1">
    <property type="method" value="X-ray"/>
    <property type="resolution" value="1.98 A"/>
    <property type="chains" value="A=571-864"/>
</dbReference>
<dbReference type="PDB" id="7AW2">
    <property type="method" value="X-ray"/>
    <property type="resolution" value="2.10 A"/>
    <property type="chains" value="A=571-864"/>
</dbReference>
<dbReference type="PDB" id="7AW3">
    <property type="method" value="X-ray"/>
    <property type="resolution" value="1.99 A"/>
    <property type="chains" value="A=571-864"/>
</dbReference>
<dbReference type="PDB" id="7AW4">
    <property type="method" value="X-ray"/>
    <property type="resolution" value="1.98 A"/>
    <property type="chains" value="A/B=570-864"/>
</dbReference>
<dbReference type="PDB" id="7CQE">
    <property type="method" value="X-ray"/>
    <property type="resolution" value="2.69 A"/>
    <property type="chains" value="A/C=571-864"/>
</dbReference>
<dbReference type="PDB" id="7DXL">
    <property type="method" value="X-ray"/>
    <property type="resolution" value="3.15 A"/>
    <property type="chains" value="A/B=570-864"/>
</dbReference>
<dbReference type="PDB" id="7M5Z">
    <property type="method" value="X-ray"/>
    <property type="resolution" value="3.06 A"/>
    <property type="chains" value="A/B=570-864"/>
</dbReference>
<dbReference type="PDB" id="7OAM">
    <property type="method" value="X-ray"/>
    <property type="resolution" value="2.65 A"/>
    <property type="chains" value="A/B=571-864"/>
</dbReference>
<dbReference type="PDB" id="7OLS">
    <property type="method" value="X-ray"/>
    <property type="resolution" value="1.89 A"/>
    <property type="chains" value="A=571-864"/>
</dbReference>
<dbReference type="PDB" id="7OLV">
    <property type="method" value="X-ray"/>
    <property type="resolution" value="2.13 A"/>
    <property type="chains" value="A=571-864"/>
</dbReference>
<dbReference type="PDB" id="7OLX">
    <property type="method" value="X-ray"/>
    <property type="resolution" value="1.98 A"/>
    <property type="chains" value="A=571-864"/>
</dbReference>
<dbReference type="PDB" id="7XHY">
    <property type="method" value="X-ray"/>
    <property type="resolution" value="2.16 A"/>
    <property type="chains" value="A=571-864"/>
</dbReference>
<dbReference type="PDB" id="9BHI">
    <property type="method" value="X-ray"/>
    <property type="resolution" value="2.07 A"/>
    <property type="chains" value="A=578-872"/>
</dbReference>
<dbReference type="PDB" id="9BHJ">
    <property type="method" value="X-ray"/>
    <property type="resolution" value="2.29 A"/>
    <property type="chains" value="A=578-872"/>
</dbReference>
<dbReference type="PDB" id="9BHK">
    <property type="method" value="X-ray"/>
    <property type="resolution" value="2.11 A"/>
    <property type="chains" value="A=578-872"/>
</dbReference>
<dbReference type="PDBsum" id="2DBJ"/>
<dbReference type="PDBsum" id="2P0C"/>
<dbReference type="PDBsum" id="3BPR"/>
<dbReference type="PDBsum" id="3BRB"/>
<dbReference type="PDBsum" id="3TCP"/>
<dbReference type="PDBsum" id="4M3Q"/>
<dbReference type="PDBsum" id="4MH7"/>
<dbReference type="PDBsum" id="4MHA"/>
<dbReference type="PDBsum" id="5K0K"/>
<dbReference type="PDBsum" id="5K0X"/>
<dbReference type="PDBsum" id="5TC0"/>
<dbReference type="PDBsum" id="5TD2"/>
<dbReference type="PDBsum" id="5U6C"/>
<dbReference type="PDBsum" id="6MEP"/>
<dbReference type="PDBsum" id="7AAX"/>
<dbReference type="PDBsum" id="7AAY"/>
<dbReference type="PDBsum" id="7AAZ"/>
<dbReference type="PDBsum" id="7AB0"/>
<dbReference type="PDBsum" id="7AB1"/>
<dbReference type="PDBsum" id="7AB2"/>
<dbReference type="PDBsum" id="7AVX"/>
<dbReference type="PDBsum" id="7AVY"/>
<dbReference type="PDBsum" id="7AVZ"/>
<dbReference type="PDBsum" id="7AW0"/>
<dbReference type="PDBsum" id="7AW1"/>
<dbReference type="PDBsum" id="7AW2"/>
<dbReference type="PDBsum" id="7AW3"/>
<dbReference type="PDBsum" id="7AW4"/>
<dbReference type="PDBsum" id="7CQE"/>
<dbReference type="PDBsum" id="7DXL"/>
<dbReference type="PDBsum" id="7M5Z"/>
<dbReference type="PDBsum" id="7OAM"/>
<dbReference type="PDBsum" id="7OLS"/>
<dbReference type="PDBsum" id="7OLV"/>
<dbReference type="PDBsum" id="7OLX"/>
<dbReference type="PDBsum" id="7XHY"/>
<dbReference type="PDBsum" id="9BHI"/>
<dbReference type="PDBsum" id="9BHJ"/>
<dbReference type="PDBsum" id="9BHK"/>
<dbReference type="SMR" id="Q12866"/>
<dbReference type="BioGRID" id="115724">
    <property type="interactions" value="118"/>
</dbReference>
<dbReference type="FunCoup" id="Q12866">
    <property type="interactions" value="256"/>
</dbReference>
<dbReference type="IntAct" id="Q12866">
    <property type="interactions" value="114"/>
</dbReference>
<dbReference type="MINT" id="Q12866"/>
<dbReference type="STRING" id="9606.ENSP00000295408"/>
<dbReference type="BindingDB" id="Q12866"/>
<dbReference type="ChEMBL" id="CHEMBL5331"/>
<dbReference type="DrugBank" id="DB08325">
    <property type="generic name" value="2-({6-[(3-Chlorophenyl)amino]-9-isopropyl-9H-purin-2-yl}amino)ethanol"/>
</dbReference>
<dbReference type="DrugBank" id="DB17159">
    <property type="generic name" value="Denfivontinib"/>
</dbReference>
<dbReference type="DrugBank" id="DB12010">
    <property type="generic name" value="Fostamatinib"/>
</dbReference>
<dbReference type="DrugBank" id="DB19201">
    <property type="generic name" value="Tamnorzatinib"/>
</dbReference>
<dbReference type="DrugCentral" id="Q12866"/>
<dbReference type="GuidetoPHARMACOLOGY" id="1837"/>
<dbReference type="CarbonylDB" id="Q12866"/>
<dbReference type="GlyConnect" id="1870">
    <property type="glycosylation" value="15 N-Linked glycans (7 sites)"/>
</dbReference>
<dbReference type="GlyCosmos" id="Q12866">
    <property type="glycosylation" value="17 sites, 18 glycans"/>
</dbReference>
<dbReference type="GlyGen" id="Q12866">
    <property type="glycosylation" value="20 sites, 26 N-linked glycans (7 sites), 2 O-linked glycans (2 sites)"/>
</dbReference>
<dbReference type="iPTMnet" id="Q12866"/>
<dbReference type="PhosphoSitePlus" id="Q12866"/>
<dbReference type="BioMuta" id="MERTK"/>
<dbReference type="DMDM" id="160332297"/>
<dbReference type="jPOST" id="Q12866"/>
<dbReference type="MassIVE" id="Q12866"/>
<dbReference type="PaxDb" id="9606-ENSP00000295408"/>
<dbReference type="PeptideAtlas" id="Q12866"/>
<dbReference type="ProteomicsDB" id="58992"/>
<dbReference type="Pumba" id="Q12866"/>
<dbReference type="Antibodypedia" id="33255">
    <property type="antibodies" value="893 antibodies from 43 providers"/>
</dbReference>
<dbReference type="DNASU" id="10461"/>
<dbReference type="Ensembl" id="ENST00000295408.9">
    <property type="protein sequence ID" value="ENSP00000295408.4"/>
    <property type="gene ID" value="ENSG00000153208.19"/>
</dbReference>
<dbReference type="GeneID" id="10461"/>
<dbReference type="KEGG" id="hsa:10461"/>
<dbReference type="MANE-Select" id="ENST00000295408.9">
    <property type="protein sequence ID" value="ENSP00000295408.4"/>
    <property type="RefSeq nucleotide sequence ID" value="NM_006343.3"/>
    <property type="RefSeq protein sequence ID" value="NP_006334.2"/>
</dbReference>
<dbReference type="UCSC" id="uc002thk.2">
    <property type="organism name" value="human"/>
</dbReference>
<dbReference type="AGR" id="HGNC:7027"/>
<dbReference type="CTD" id="10461"/>
<dbReference type="DisGeNET" id="10461"/>
<dbReference type="GeneCards" id="MERTK"/>
<dbReference type="GeneReviews" id="MERTK"/>
<dbReference type="HGNC" id="HGNC:7027">
    <property type="gene designation" value="MERTK"/>
</dbReference>
<dbReference type="HPA" id="ENSG00000153208">
    <property type="expression patterns" value="Tissue enhanced (choroid)"/>
</dbReference>
<dbReference type="MalaCards" id="MERTK"/>
<dbReference type="MIM" id="604705">
    <property type="type" value="gene"/>
</dbReference>
<dbReference type="MIM" id="613862">
    <property type="type" value="phenotype"/>
</dbReference>
<dbReference type="neXtProt" id="NX_Q12866"/>
<dbReference type="OpenTargets" id="ENSG00000153208"/>
<dbReference type="Orphanet" id="791">
    <property type="disease" value="Retinitis pigmentosa"/>
</dbReference>
<dbReference type="PharmGKB" id="PA30759"/>
<dbReference type="VEuPathDB" id="HostDB:ENSG00000153208"/>
<dbReference type="eggNOG" id="ENOG502QQQ3">
    <property type="taxonomic scope" value="Eukaryota"/>
</dbReference>
<dbReference type="GeneTree" id="ENSGT00940000155669"/>
<dbReference type="InParanoid" id="Q12866"/>
<dbReference type="OMA" id="QETRFGN"/>
<dbReference type="OrthoDB" id="4062651at2759"/>
<dbReference type="PAN-GO" id="Q12866">
    <property type="GO annotations" value="9 GO annotations based on evolutionary models"/>
</dbReference>
<dbReference type="PhylomeDB" id="Q12866"/>
<dbReference type="TreeFam" id="TF317402"/>
<dbReference type="BRENDA" id="2.7.10.1">
    <property type="organism ID" value="2681"/>
</dbReference>
<dbReference type="PathwayCommons" id="Q12866"/>
<dbReference type="Reactome" id="R-HSA-202733">
    <property type="pathway name" value="Cell surface interactions at the vascular wall"/>
</dbReference>
<dbReference type="SignaLink" id="Q12866"/>
<dbReference type="SIGNOR" id="Q12866"/>
<dbReference type="BioGRID-ORCS" id="10461">
    <property type="hits" value="14 hits in 1189 CRISPR screens"/>
</dbReference>
<dbReference type="ChiTaRS" id="MERTK">
    <property type="organism name" value="human"/>
</dbReference>
<dbReference type="EvolutionaryTrace" id="Q12866"/>
<dbReference type="GeneWiki" id="MERTK"/>
<dbReference type="GenomeRNAi" id="10461"/>
<dbReference type="Pharos" id="Q12866">
    <property type="development level" value="Tchem"/>
</dbReference>
<dbReference type="PRO" id="PR:Q12866"/>
<dbReference type="Proteomes" id="UP000005640">
    <property type="component" value="Chromosome 2"/>
</dbReference>
<dbReference type="RNAct" id="Q12866">
    <property type="molecule type" value="protein"/>
</dbReference>
<dbReference type="Bgee" id="ENSG00000153208">
    <property type="expression patterns" value="Expressed in right adrenal gland cortex and 160 other cell types or tissues"/>
</dbReference>
<dbReference type="ExpressionAtlas" id="Q12866">
    <property type="expression patterns" value="baseline and differential"/>
</dbReference>
<dbReference type="GO" id="GO:0005737">
    <property type="term" value="C:cytoplasm"/>
    <property type="evidence" value="ECO:0000314"/>
    <property type="project" value="UniProtKB"/>
</dbReference>
<dbReference type="GO" id="GO:0005615">
    <property type="term" value="C:extracellular space"/>
    <property type="evidence" value="ECO:0000314"/>
    <property type="project" value="UniProtKB"/>
</dbReference>
<dbReference type="GO" id="GO:0001750">
    <property type="term" value="C:photoreceptor outer segment"/>
    <property type="evidence" value="ECO:0007669"/>
    <property type="project" value="Ensembl"/>
</dbReference>
<dbReference type="GO" id="GO:0005886">
    <property type="term" value="C:plasma membrane"/>
    <property type="evidence" value="ECO:0000318"/>
    <property type="project" value="GO_Central"/>
</dbReference>
<dbReference type="GO" id="GO:0043235">
    <property type="term" value="C:receptor complex"/>
    <property type="evidence" value="ECO:0000318"/>
    <property type="project" value="GO_Central"/>
</dbReference>
<dbReference type="GO" id="GO:0005524">
    <property type="term" value="F:ATP binding"/>
    <property type="evidence" value="ECO:0007669"/>
    <property type="project" value="UniProtKB-KW"/>
</dbReference>
<dbReference type="GO" id="GO:0004714">
    <property type="term" value="F:transmembrane receptor protein tyrosine kinase activity"/>
    <property type="evidence" value="ECO:0000318"/>
    <property type="project" value="GO_Central"/>
</dbReference>
<dbReference type="GO" id="GO:0016477">
    <property type="term" value="P:cell migration"/>
    <property type="evidence" value="ECO:0000318"/>
    <property type="project" value="GO_Central"/>
</dbReference>
<dbReference type="GO" id="GO:0007169">
    <property type="term" value="P:cell surface receptor protein tyrosine kinase signaling pathway"/>
    <property type="evidence" value="ECO:0000318"/>
    <property type="project" value="GO_Central"/>
</dbReference>
<dbReference type="GO" id="GO:0007166">
    <property type="term" value="P:cell surface receptor signaling pathway"/>
    <property type="evidence" value="ECO:0000304"/>
    <property type="project" value="ProtInc"/>
</dbReference>
<dbReference type="GO" id="GO:0007267">
    <property type="term" value="P:cell-cell signaling"/>
    <property type="evidence" value="ECO:0000304"/>
    <property type="project" value="ProtInc"/>
</dbReference>
<dbReference type="GO" id="GO:0051649">
    <property type="term" value="P:establishment of localization in cell"/>
    <property type="evidence" value="ECO:0007669"/>
    <property type="project" value="Ensembl"/>
</dbReference>
<dbReference type="GO" id="GO:0001779">
    <property type="term" value="P:natural killer cell differentiation"/>
    <property type="evidence" value="ECO:0007669"/>
    <property type="project" value="Ensembl"/>
</dbReference>
<dbReference type="GO" id="GO:0001818">
    <property type="term" value="P:negative regulation of cytokine production"/>
    <property type="evidence" value="ECO:0007669"/>
    <property type="project" value="Ensembl"/>
</dbReference>
<dbReference type="GO" id="GO:2000107">
    <property type="term" value="P:negative regulation of leukocyte apoptotic process"/>
    <property type="evidence" value="ECO:0000315"/>
    <property type="project" value="CACAO"/>
</dbReference>
<dbReference type="GO" id="GO:0051250">
    <property type="term" value="P:negative regulation of lymphocyte activation"/>
    <property type="evidence" value="ECO:0007669"/>
    <property type="project" value="Ensembl"/>
</dbReference>
<dbReference type="GO" id="GO:0007399">
    <property type="term" value="P:nervous system development"/>
    <property type="evidence" value="ECO:0000318"/>
    <property type="project" value="GO_Central"/>
</dbReference>
<dbReference type="GO" id="GO:0097350">
    <property type="term" value="P:neutrophil clearance"/>
    <property type="evidence" value="ECO:0007669"/>
    <property type="project" value="Ensembl"/>
</dbReference>
<dbReference type="GO" id="GO:0006909">
    <property type="term" value="P:phagocytosis"/>
    <property type="evidence" value="ECO:0000315"/>
    <property type="project" value="BHF-UCL"/>
</dbReference>
<dbReference type="GO" id="GO:0030168">
    <property type="term" value="P:platelet activation"/>
    <property type="evidence" value="ECO:0007669"/>
    <property type="project" value="Ensembl"/>
</dbReference>
<dbReference type="GO" id="GO:0050766">
    <property type="term" value="P:positive regulation of phagocytosis"/>
    <property type="evidence" value="ECO:0000314"/>
    <property type="project" value="UniProtKB"/>
</dbReference>
<dbReference type="GO" id="GO:0051897">
    <property type="term" value="P:positive regulation of phosphatidylinositol 3-kinase/protein kinase B signal transduction"/>
    <property type="evidence" value="ECO:0007669"/>
    <property type="project" value="Ensembl"/>
</dbReference>
<dbReference type="GO" id="GO:0006468">
    <property type="term" value="P:protein phosphorylation"/>
    <property type="evidence" value="ECO:0000304"/>
    <property type="project" value="ProtInc"/>
</dbReference>
<dbReference type="GO" id="GO:0060041">
    <property type="term" value="P:retina development in camera-type eye"/>
    <property type="evidence" value="ECO:0007669"/>
    <property type="project" value="Ensembl"/>
</dbReference>
<dbReference type="GO" id="GO:0032940">
    <property type="term" value="P:secretion by cell"/>
    <property type="evidence" value="ECO:0007669"/>
    <property type="project" value="Ensembl"/>
</dbReference>
<dbReference type="GO" id="GO:0007283">
    <property type="term" value="P:spermatogenesis"/>
    <property type="evidence" value="ECO:0007669"/>
    <property type="project" value="Ensembl"/>
</dbReference>
<dbReference type="GO" id="GO:0034446">
    <property type="term" value="P:substrate adhesion-dependent cell spreading"/>
    <property type="evidence" value="ECO:0007669"/>
    <property type="project" value="Ensembl"/>
</dbReference>
<dbReference type="GO" id="GO:0060068">
    <property type="term" value="P:vagina development"/>
    <property type="evidence" value="ECO:0007669"/>
    <property type="project" value="Ensembl"/>
</dbReference>
<dbReference type="CDD" id="cd00063">
    <property type="entry name" value="FN3"/>
    <property type="match status" value="2"/>
</dbReference>
<dbReference type="CDD" id="cd00096">
    <property type="entry name" value="Ig"/>
    <property type="match status" value="1"/>
</dbReference>
<dbReference type="CDD" id="cd05749">
    <property type="entry name" value="IgI_2_Axl_Tyro3_like"/>
    <property type="match status" value="1"/>
</dbReference>
<dbReference type="CDD" id="cd14204">
    <property type="entry name" value="PTKc_Mer"/>
    <property type="match status" value="1"/>
</dbReference>
<dbReference type="FunFam" id="2.60.40.10:FF:000902">
    <property type="entry name" value="MER proto-oncogene, tyrosine kinase"/>
    <property type="match status" value="1"/>
</dbReference>
<dbReference type="FunFam" id="2.60.40.10:FF:001050">
    <property type="entry name" value="MER proto-oncogene, tyrosine kinase"/>
    <property type="match status" value="1"/>
</dbReference>
<dbReference type="FunFam" id="2.60.40.10:FF:000834">
    <property type="entry name" value="Proto-oncogene tyrosine-protein kinase MER"/>
    <property type="match status" value="1"/>
</dbReference>
<dbReference type="FunFam" id="1.10.510.10:FF:000089">
    <property type="entry name" value="Tyrosine-protein kinase receptor TYRO3"/>
    <property type="match status" value="1"/>
</dbReference>
<dbReference type="FunFam" id="2.60.40.10:FF:000296">
    <property type="entry name" value="Tyrosine-protein kinase receptor TYRO3"/>
    <property type="match status" value="1"/>
</dbReference>
<dbReference type="FunFam" id="3.30.200.20:FF:000111">
    <property type="entry name" value="Tyrosine-protein kinase receptor TYRO3"/>
    <property type="match status" value="1"/>
</dbReference>
<dbReference type="Gene3D" id="2.60.40.10">
    <property type="entry name" value="Immunoglobulins"/>
    <property type="match status" value="4"/>
</dbReference>
<dbReference type="Gene3D" id="3.30.200.20">
    <property type="entry name" value="Phosphorylase Kinase, domain 1"/>
    <property type="match status" value="1"/>
</dbReference>
<dbReference type="Gene3D" id="1.10.510.10">
    <property type="entry name" value="Transferase(Phosphotransferase) domain 1"/>
    <property type="match status" value="1"/>
</dbReference>
<dbReference type="InterPro" id="IPR003961">
    <property type="entry name" value="FN3_dom"/>
</dbReference>
<dbReference type="InterPro" id="IPR036116">
    <property type="entry name" value="FN3_sf"/>
</dbReference>
<dbReference type="InterPro" id="IPR007110">
    <property type="entry name" value="Ig-like_dom"/>
</dbReference>
<dbReference type="InterPro" id="IPR036179">
    <property type="entry name" value="Ig-like_dom_sf"/>
</dbReference>
<dbReference type="InterPro" id="IPR013783">
    <property type="entry name" value="Ig-like_fold"/>
</dbReference>
<dbReference type="InterPro" id="IPR003599">
    <property type="entry name" value="Ig_sub"/>
</dbReference>
<dbReference type="InterPro" id="IPR013151">
    <property type="entry name" value="Immunoglobulin_dom"/>
</dbReference>
<dbReference type="InterPro" id="IPR011009">
    <property type="entry name" value="Kinase-like_dom_sf"/>
</dbReference>
<dbReference type="InterPro" id="IPR000719">
    <property type="entry name" value="Prot_kinase_dom"/>
</dbReference>
<dbReference type="InterPro" id="IPR017441">
    <property type="entry name" value="Protein_kinase_ATP_BS"/>
</dbReference>
<dbReference type="InterPro" id="IPR050122">
    <property type="entry name" value="RTK"/>
</dbReference>
<dbReference type="InterPro" id="IPR001245">
    <property type="entry name" value="Ser-Thr/Tyr_kinase_cat_dom"/>
</dbReference>
<dbReference type="InterPro" id="IPR008266">
    <property type="entry name" value="Tyr_kinase_AS"/>
</dbReference>
<dbReference type="InterPro" id="IPR020635">
    <property type="entry name" value="Tyr_kinase_cat_dom"/>
</dbReference>
<dbReference type="PANTHER" id="PTHR24416:SF257">
    <property type="entry name" value="TYROSINE-PROTEIN KINASE MER"/>
    <property type="match status" value="1"/>
</dbReference>
<dbReference type="PANTHER" id="PTHR24416">
    <property type="entry name" value="TYROSINE-PROTEIN KINASE RECEPTOR"/>
    <property type="match status" value="1"/>
</dbReference>
<dbReference type="Pfam" id="PF00041">
    <property type="entry name" value="fn3"/>
    <property type="match status" value="1"/>
</dbReference>
<dbReference type="Pfam" id="PF00047">
    <property type="entry name" value="ig"/>
    <property type="match status" value="1"/>
</dbReference>
<dbReference type="Pfam" id="PF13927">
    <property type="entry name" value="Ig_3"/>
    <property type="match status" value="1"/>
</dbReference>
<dbReference type="Pfam" id="PF07714">
    <property type="entry name" value="PK_Tyr_Ser-Thr"/>
    <property type="match status" value="1"/>
</dbReference>
<dbReference type="PRINTS" id="PR00109">
    <property type="entry name" value="TYRKINASE"/>
</dbReference>
<dbReference type="SMART" id="SM00060">
    <property type="entry name" value="FN3"/>
    <property type="match status" value="2"/>
</dbReference>
<dbReference type="SMART" id="SM00409">
    <property type="entry name" value="IG"/>
    <property type="match status" value="2"/>
</dbReference>
<dbReference type="SMART" id="SM00219">
    <property type="entry name" value="TyrKc"/>
    <property type="match status" value="1"/>
</dbReference>
<dbReference type="SUPFAM" id="SSF49265">
    <property type="entry name" value="Fibronectin type III"/>
    <property type="match status" value="1"/>
</dbReference>
<dbReference type="SUPFAM" id="SSF48726">
    <property type="entry name" value="Immunoglobulin"/>
    <property type="match status" value="2"/>
</dbReference>
<dbReference type="SUPFAM" id="SSF56112">
    <property type="entry name" value="Protein kinase-like (PK-like)"/>
    <property type="match status" value="1"/>
</dbReference>
<dbReference type="PROSITE" id="PS50853">
    <property type="entry name" value="FN3"/>
    <property type="match status" value="2"/>
</dbReference>
<dbReference type="PROSITE" id="PS50835">
    <property type="entry name" value="IG_LIKE"/>
    <property type="match status" value="2"/>
</dbReference>
<dbReference type="PROSITE" id="PS00107">
    <property type="entry name" value="PROTEIN_KINASE_ATP"/>
    <property type="match status" value="1"/>
</dbReference>
<dbReference type="PROSITE" id="PS50011">
    <property type="entry name" value="PROTEIN_KINASE_DOM"/>
    <property type="match status" value="1"/>
</dbReference>
<dbReference type="PROSITE" id="PS00109">
    <property type="entry name" value="PROTEIN_KINASE_TYR"/>
    <property type="match status" value="1"/>
</dbReference>
<comment type="function">
    <text evidence="12 16">Receptor tyrosine kinase that transduces signals from the extracellular matrix into the cytoplasm by binding to several ligands including LGALS3, TUB, TULP1 or GAS6. Regulates many physiological processes including cell survival, migration, differentiation, and phagocytosis of apoptotic cells (efferocytosis). Ligand binding at the cell surface induces autophosphorylation of MERTK on its intracellular domain that provides docking sites for downstream signaling molecules. Following activation by ligand, interacts with GRB2 or PLCG2 and induces phosphorylation of MAPK1, MAPK2, FAK/PTK2 or RAC1. MERTK signaling plays a role in various processes such as macrophage clearance of apoptotic cells, platelet aggregation, cytoskeleton reorganization and engulfment (PubMed:32640697). Functions in the retinal pigment epithelium (RPE) as a regulator of rod outer segments fragments phagocytosis. Also plays an important role in inhibition of Toll-like receptors (TLRs)-mediated innate immune response by activating STAT1, which selectively induces production of suppressors of cytokine signaling SOCS1 and SOCS3.</text>
</comment>
<comment type="catalytic activity">
    <reaction evidence="7">
        <text>L-tyrosyl-[protein] + ATP = O-phospho-L-tyrosyl-[protein] + ADP + H(+)</text>
        <dbReference type="Rhea" id="RHEA:10596"/>
        <dbReference type="Rhea" id="RHEA-COMP:10136"/>
        <dbReference type="Rhea" id="RHEA-COMP:20101"/>
        <dbReference type="ChEBI" id="CHEBI:15378"/>
        <dbReference type="ChEBI" id="CHEBI:30616"/>
        <dbReference type="ChEBI" id="CHEBI:46858"/>
        <dbReference type="ChEBI" id="CHEBI:61978"/>
        <dbReference type="ChEBI" id="CHEBI:456216"/>
        <dbReference type="EC" id="2.7.10.1"/>
    </reaction>
</comment>
<comment type="subunit">
    <text evidence="1 9 10 15 16 19">Interacts (upon activation) with TNK2; stimulates TNK2 autophosphorylation. Interacts (via N-terminus) with extracellular ligands LGALS3, TUB, TULP1 and GAS6 (By similarity). Interacts with VAV1 in a phosphotyrosine-independent manner. Interacts with TIMD4; this interaction enhances TIMD4-mediated efferocytosis (PubMed:32640697).</text>
</comment>
<comment type="subcellular location">
    <subcellularLocation>
        <location evidence="16">Cell membrane</location>
        <topology evidence="1">Single-pass type I membrane protein</topology>
    </subcellularLocation>
</comment>
<comment type="tissue specificity">
    <text>Not expressed in normal B- and T-lymphocytes but is expressed in numerous neoplastic B- and T-cell lines. Highly expressed in testis, ovary, prostate, lung, and kidney, with lower expression in spleen, small intestine, colon, and liver.</text>
</comment>
<comment type="PTM">
    <text evidence="1">Autophosphorylated on Tyr-749, Tyr-753 and Tyr-754 in the activation loop allowing full activity. Autophosphorylated on Tyr-872 leading to recruitment of downstream partners of the signaling cascade such as PLCG2 (By similarity).</text>
</comment>
<comment type="disease" evidence="8">
    <disease id="DI-03030">
        <name>Retinitis pigmentosa 38</name>
        <acronym>RP38</acronym>
        <description>A retinal dystrophy belonging to the group of pigmentary retinopathies. Retinitis pigmentosa is characterized by retinal pigment deposits visible on fundus examination and primary loss of rod photoreceptor cells followed by secondary loss of cone photoreceptors. Patients typically have night vision blindness and loss of midperipheral visual field. As their condition progresses, they lose their far peripheral visual field and eventually central vision as well.</description>
        <dbReference type="MIM" id="613862"/>
    </disease>
    <text>The disease is caused by variants affecting the gene represented in this entry.</text>
</comment>
<comment type="similarity">
    <text evidence="5">Belongs to the protein kinase superfamily. Tyr protein kinase family. AXL/UFO subfamily.</text>
</comment>
<comment type="online information" name="Atlas of Genetics and Cytogenetics in Oncology and Haematology">
    <link uri="https://atlasgeneticsoncology.org/gene/41339/MERTK"/>
</comment>
<gene>
    <name type="primary">MERTK</name>
    <name type="synonym">MER</name>
</gene>
<feature type="signal peptide" evidence="3">
    <location>
        <begin position="1"/>
        <end position="20"/>
    </location>
</feature>
<feature type="chain" id="PRO_0000024443" description="Tyrosine-protein kinase Mer">
    <location>
        <begin position="21"/>
        <end position="999"/>
    </location>
</feature>
<feature type="topological domain" description="Extracellular" evidence="3">
    <location>
        <begin position="21"/>
        <end position="505"/>
    </location>
</feature>
<feature type="transmembrane region" description="Helical" evidence="3">
    <location>
        <begin position="506"/>
        <end position="526"/>
    </location>
</feature>
<feature type="topological domain" description="Cytoplasmic" evidence="3">
    <location>
        <begin position="527"/>
        <end position="999"/>
    </location>
</feature>
<feature type="domain" description="Ig-like C2-type 1">
    <location>
        <begin position="81"/>
        <end position="186"/>
    </location>
</feature>
<feature type="domain" description="Ig-like C2-type 2">
    <location>
        <begin position="197"/>
        <end position="273"/>
    </location>
</feature>
<feature type="domain" description="Fibronectin type-III 1" evidence="6">
    <location>
        <begin position="286"/>
        <end position="381"/>
    </location>
</feature>
<feature type="domain" description="Fibronectin type-III 2" evidence="6">
    <location>
        <begin position="386"/>
        <end position="484"/>
    </location>
</feature>
<feature type="domain" description="Protein kinase" evidence="5">
    <location>
        <begin position="587"/>
        <end position="858"/>
    </location>
</feature>
<feature type="active site" description="Proton acceptor" evidence="5 7">
    <location>
        <position position="723"/>
    </location>
</feature>
<feature type="binding site" evidence="5">
    <location>
        <begin position="593"/>
        <end position="601"/>
    </location>
    <ligand>
        <name>ATP</name>
        <dbReference type="ChEBI" id="CHEBI:30616"/>
    </ligand>
</feature>
<feature type="binding site" evidence="5">
    <location>
        <position position="615"/>
    </location>
    <ligand>
        <name>ATP</name>
        <dbReference type="ChEBI" id="CHEBI:30616"/>
    </ligand>
</feature>
<feature type="modified residue" description="Phosphoserine" evidence="21">
    <location>
        <position position="543"/>
    </location>
</feature>
<feature type="modified residue" description="Phosphotyrosine; by autocatalysis" evidence="18">
    <location>
        <position position="749"/>
    </location>
</feature>
<feature type="modified residue" description="Phosphotyrosine; by autocatalysis" evidence="18">
    <location>
        <position position="753"/>
    </location>
</feature>
<feature type="modified residue" description="Phosphotyrosine; by autocatalysis" evidence="18">
    <location>
        <position position="754"/>
    </location>
</feature>
<feature type="modified residue" description="Phosphotyrosine; by autocatalysis" evidence="2">
    <location>
        <position position="872"/>
    </location>
</feature>
<feature type="modified residue" description="Phosphoserine" evidence="21">
    <location>
        <position position="935"/>
    </location>
</feature>
<feature type="glycosylation site" description="N-linked (GlcNAc...) asparagine" evidence="3">
    <location>
        <position position="114"/>
    </location>
</feature>
<feature type="glycosylation site" description="N-linked (GlcNAc...) asparagine" evidence="3">
    <location>
        <position position="170"/>
    </location>
</feature>
<feature type="glycosylation site" description="N-linked (GlcNAc...) asparagine" evidence="3">
    <location>
        <position position="207"/>
    </location>
</feature>
<feature type="glycosylation site" description="N-linked (GlcNAc...) asparagine" evidence="3">
    <location>
        <position position="215"/>
    </location>
</feature>
<feature type="glycosylation site" description="N-linked (GlcNAc...) asparagine" evidence="3">
    <location>
        <position position="234"/>
    </location>
</feature>
<feature type="glycosylation site" description="N-linked (GlcNAc...) asparagine" evidence="3">
    <location>
        <position position="294"/>
    </location>
</feature>
<feature type="glycosylation site" description="N-linked (GlcNAc...) asparagine" evidence="3">
    <location>
        <position position="316"/>
    </location>
</feature>
<feature type="glycosylation site" description="N-linked (GlcNAc...) asparagine" evidence="3">
    <location>
        <position position="329"/>
    </location>
</feature>
<feature type="glycosylation site" description="N-linked (GlcNAc...) asparagine" evidence="3">
    <location>
        <position position="336"/>
    </location>
</feature>
<feature type="glycosylation site" description="N-linked (GlcNAc...) asparagine" evidence="3">
    <location>
        <position position="354"/>
    </location>
</feature>
<feature type="glycosylation site" description="N-linked (GlcNAc...) asparagine" evidence="3">
    <location>
        <position position="389"/>
    </location>
</feature>
<feature type="glycosylation site" description="N-linked (GlcNAc...) asparagine" evidence="3">
    <location>
        <position position="395"/>
    </location>
</feature>
<feature type="glycosylation site" description="N-linked (GlcNAc...) asparagine" evidence="11">
    <location>
        <position position="442"/>
    </location>
</feature>
<feature type="glycosylation site" description="N-linked (GlcNAc...) asparagine" evidence="3">
    <location>
        <position position="454"/>
    </location>
</feature>
<feature type="disulfide bond" evidence="4">
    <location>
        <begin position="115"/>
        <end position="175"/>
    </location>
</feature>
<feature type="disulfide bond" evidence="4">
    <location>
        <begin position="218"/>
        <end position="262"/>
    </location>
</feature>
<feature type="sequence variant" id="VAR_021039" description="In dbSNP:rs35898499." evidence="8 13">
    <original>R</original>
    <variation>S</variation>
    <location>
        <position position="20"/>
    </location>
</feature>
<feature type="sequence variant" id="VAR_021040" description="In dbSNP:rs13027171." evidence="8 13 17">
    <original>S</original>
    <variation>N</variation>
    <location>
        <position position="118"/>
    </location>
</feature>
<feature type="sequence variant" id="VAR_041741" description="In dbSNP:rs56205303." evidence="13">
    <original>V</original>
    <variation>M</variation>
    <location>
        <position position="185"/>
    </location>
</feature>
<feature type="sequence variant" id="VAR_067194" description="Found in a patient with Leber congenital amaurosis; dbSNP:rs1475870132." evidence="14">
    <original>F</original>
    <variation>V</variation>
    <location>
        <position position="214"/>
    </location>
</feature>
<feature type="sequence variant" id="VAR_021041" description="In dbSNP:rs7588635." evidence="8 13">
    <original>A</original>
    <variation>T</variation>
    <location>
        <position position="282"/>
    </location>
</feature>
<feature type="sequence variant" id="VAR_041742" description="In dbSNP:rs766215580." evidence="13">
    <original>E</original>
    <variation>K</variation>
    <location>
        <position position="289"/>
    </location>
</feature>
<feature type="sequence variant" id="VAR_021042" description="In dbSNP:rs34072093." evidence="8 13">
    <original>R</original>
    <variation>H</variation>
    <location>
        <position position="293"/>
    </location>
</feature>
<feature type="sequence variant" id="VAR_051698" description="In dbSNP:rs34943572.">
    <original>N</original>
    <variation>S</variation>
    <location>
        <position position="329"/>
    </location>
</feature>
<feature type="sequence variant" id="VAR_041743" description="In a renal clear cell carcinoma sample; somatic mutation." evidence="13">
    <original>A</original>
    <variation>G</variation>
    <location>
        <position position="446"/>
    </location>
</feature>
<feature type="sequence variant" id="VAR_041744" description="In dbSNP:rs34010621." evidence="13">
    <original>V</original>
    <variation>L</variation>
    <location>
        <position position="452"/>
    </location>
</feature>
<feature type="sequence variant" id="VAR_021043" description="In dbSNP:rs7604639." evidence="8 13">
    <original>R</original>
    <variation>K</variation>
    <location>
        <position position="466"/>
    </location>
</feature>
<feature type="sequence variant" id="VAR_021044" description="In dbSNP:rs35858762." evidence="8 13">
    <original>N</original>
    <variation>S</variation>
    <location>
        <position position="498"/>
    </location>
</feature>
<feature type="sequence variant" id="VAR_021045" description="In dbSNP:rs2230515." evidence="8 13">
    <original>I</original>
    <variation>V</variation>
    <location>
        <position position="518"/>
    </location>
</feature>
<feature type="sequence variant" id="VAR_021046" description="In RP38; dbSNP:rs113485015." evidence="8">
    <original>E</original>
    <variation>K</variation>
    <location>
        <position position="540"/>
    </location>
</feature>
<feature type="sequence variant" id="VAR_021047" description="In RP38." evidence="8">
    <original>S</original>
    <variation>C</variation>
    <location>
        <position position="661"/>
    </location>
</feature>
<feature type="sequence variant" id="VAR_041745" description="In dbSNP:rs56209758." evidence="13">
    <original>Q</original>
    <variation>E</variation>
    <location>
        <position position="662"/>
    </location>
</feature>
<feature type="sequence variant" id="VAR_041746" description="In a head &amp; Neck squamous cell carcinoma sample; somatic mutation." evidence="13">
    <original>A</original>
    <variation>S</variation>
    <location>
        <position position="708"/>
    </location>
</feature>
<feature type="sequence variant" id="VAR_041747" description="In dbSNP:rs55924349." evidence="13">
    <original>E</original>
    <variation>Q</variation>
    <location>
        <position position="823"/>
    </location>
</feature>
<feature type="sequence variant" id="VAR_020285" description="In dbSNP:rs2230516." evidence="13">
    <original>R</original>
    <variation>W</variation>
    <location>
        <position position="865"/>
    </location>
</feature>
<feature type="sequence variant" id="VAR_029237" description="In dbSNP:rs2230517." evidence="13">
    <original>V</original>
    <variation>I</variation>
    <location>
        <position position="870"/>
    </location>
</feature>
<feature type="sequence variant" id="VAR_021048" description="In RP38; dbSNP:rs377341255." evidence="8">
    <original>I</original>
    <variation>T</variation>
    <location>
        <position position="871"/>
    </location>
</feature>
<feature type="sequence variant" id="VAR_021049" evidence="8">
    <original>I</original>
    <variation>V</variation>
    <location>
        <position position="871"/>
    </location>
</feature>
<feature type="sequence variant" id="VAR_067195" description="Found in a patient with Leber congenital amaurosis; dbSNP:rs201460398." evidence="14">
    <original>P</original>
    <variation>L</variation>
    <location>
        <position position="958"/>
    </location>
</feature>
<feature type="sequence conflict" description="In Ref. 1; AAB60430." evidence="20" ref="1">
    <original>A</original>
    <variation>G</variation>
    <location>
        <position position="140"/>
    </location>
</feature>
<feature type="sequence conflict" description="In Ref. 1; AAB60430." evidence="20" ref="1">
    <original>A</original>
    <variation>R</variation>
    <location>
        <position position="143"/>
    </location>
</feature>
<feature type="sequence conflict" description="In Ref. 1; AAB60430." evidence="20" ref="1">
    <original>S</original>
    <variation>G</variation>
    <location>
        <position position="247"/>
    </location>
</feature>
<feature type="sequence conflict" description="In Ref. 1; AAB60430." evidence="20" ref="1">
    <original>K</original>
    <variation>Q</variation>
    <location>
        <position position="274"/>
    </location>
</feature>
<feature type="sequence conflict" description="In Ref. 1; AAB60430." evidence="20" ref="1">
    <original>S</original>
    <variation>G</variation>
    <location>
        <position position="328"/>
    </location>
</feature>
<feature type="sequence conflict" description="In Ref. 1; AAB60430." evidence="20" ref="1">
    <original>Q</original>
    <variation>H</variation>
    <location>
        <position position="628"/>
    </location>
</feature>
<feature type="sequence conflict" description="In Ref. 1; AAB60430." evidence="20" ref="1">
    <original>A</original>
    <variation>R</variation>
    <location>
        <position position="794"/>
    </location>
</feature>
<feature type="sequence conflict" description="In Ref. 1; AAB60430." evidence="20" ref="1">
    <original>S</original>
    <variation>P</variation>
    <location>
        <position position="888"/>
    </location>
</feature>
<feature type="strand" evidence="22">
    <location>
        <begin position="388"/>
        <end position="394"/>
    </location>
</feature>
<feature type="strand" evidence="22">
    <location>
        <begin position="396"/>
        <end position="406"/>
    </location>
</feature>
<feature type="strand" evidence="22">
    <location>
        <begin position="417"/>
        <end position="428"/>
    </location>
</feature>
<feature type="strand" evidence="22">
    <location>
        <begin position="431"/>
        <end position="441"/>
    </location>
</feature>
<feature type="strand" evidence="22">
    <location>
        <begin position="446"/>
        <end position="449"/>
    </location>
</feature>
<feature type="strand" evidence="22">
    <location>
        <begin position="453"/>
        <end position="459"/>
    </location>
</feature>
<feature type="strand" evidence="22">
    <location>
        <begin position="461"/>
        <end position="467"/>
    </location>
</feature>
<feature type="strand" evidence="22">
    <location>
        <begin position="476"/>
        <end position="479"/>
    </location>
</feature>
<feature type="helix" evidence="24">
    <location>
        <begin position="571"/>
        <end position="580"/>
    </location>
</feature>
<feature type="helix" evidence="24">
    <location>
        <begin position="584"/>
        <end position="586"/>
    </location>
</feature>
<feature type="strand" evidence="24">
    <location>
        <begin position="587"/>
        <end position="595"/>
    </location>
</feature>
<feature type="strand" evidence="24">
    <location>
        <begin position="600"/>
        <end position="607"/>
    </location>
</feature>
<feature type="strand" evidence="24">
    <location>
        <begin position="613"/>
        <end position="620"/>
    </location>
</feature>
<feature type="strand" evidence="25">
    <location>
        <begin position="624"/>
        <end position="626"/>
    </location>
</feature>
<feature type="helix" evidence="24">
    <location>
        <begin position="628"/>
        <end position="643"/>
    </location>
</feature>
<feature type="strand" evidence="24">
    <location>
        <begin position="654"/>
        <end position="659"/>
    </location>
</feature>
<feature type="strand" evidence="27">
    <location>
        <begin position="661"/>
        <end position="663"/>
    </location>
</feature>
<feature type="strand" evidence="24">
    <location>
        <begin position="665"/>
        <end position="672"/>
    </location>
</feature>
<feature type="helix" evidence="24">
    <location>
        <begin position="679"/>
        <end position="685"/>
    </location>
</feature>
<feature type="strand" evidence="24">
    <location>
        <begin position="688"/>
        <end position="692"/>
    </location>
</feature>
<feature type="helix" evidence="24">
    <location>
        <begin position="697"/>
        <end position="716"/>
    </location>
</feature>
<feature type="helix" evidence="24">
    <location>
        <begin position="726"/>
        <end position="728"/>
    </location>
</feature>
<feature type="strand" evidence="24">
    <location>
        <begin position="729"/>
        <end position="731"/>
    </location>
</feature>
<feature type="turn" evidence="26">
    <location>
        <begin position="733"/>
        <end position="735"/>
    </location>
</feature>
<feature type="strand" evidence="24">
    <location>
        <begin position="737"/>
        <end position="739"/>
    </location>
</feature>
<feature type="helix" evidence="23">
    <location>
        <begin position="758"/>
        <end position="761"/>
    </location>
</feature>
<feature type="helix" evidence="24">
    <location>
        <begin position="764"/>
        <end position="766"/>
    </location>
</feature>
<feature type="helix" evidence="24">
    <location>
        <begin position="769"/>
        <end position="773"/>
    </location>
</feature>
<feature type="helix" evidence="24">
    <location>
        <begin position="779"/>
        <end position="794"/>
    </location>
</feature>
<feature type="strand" evidence="26">
    <location>
        <begin position="800"/>
        <end position="804"/>
    </location>
</feature>
<feature type="helix" evidence="24">
    <location>
        <begin position="806"/>
        <end position="808"/>
    </location>
</feature>
<feature type="helix" evidence="24">
    <location>
        <begin position="809"/>
        <end position="814"/>
    </location>
</feature>
<feature type="strand" evidence="25">
    <location>
        <begin position="822"/>
        <end position="824"/>
    </location>
</feature>
<feature type="helix" evidence="24">
    <location>
        <begin position="827"/>
        <end position="835"/>
    </location>
</feature>
<feature type="helix" evidence="24">
    <location>
        <begin position="841"/>
        <end position="843"/>
    </location>
</feature>
<feature type="helix" evidence="24">
    <location>
        <begin position="847"/>
        <end position="860"/>
    </location>
</feature>
<accession>Q12866</accession>
<accession>Q9HBB4</accession>
<sequence>MGPAPLPLLLGLFLPALWRRAITEAREEAKPYPLFPGPFPGSLQTDHTPLLSLPHASGYQPALMFSPTQPGRPHTGNVAIPQVTSVESKPLPPLAFKHTVGHIILSEHKGVKFNCSISVPNIYQDTTISWWKDGKELLGAHHAITQFYPDDEVTAIIASFSITSVQRSDNGSYICKMKINNEEIVSDPIYIEVQGLPHFTKQPESMNVTRNTAFNLTCQAVGPPEPVNIFWVQNSSRVNEQPEKSPSVLTVPGLTEMAVFSCEAHNDKGLTVSKGVQINIKAIPSPPTEVSIRNSTAHSILISWVPGFDGYSPFRNCSIQVKEADPLSNGSVMIFNTSALPHLYQIKQLQALANYSIGVSCMNEIGWSAVSPWILASTTEGAPSVAPLNVTVFLNESSDNVDIRWMKPPTKQQDGELVGYRISHVWQSAGISKELLEEVGQNGSRARISVQVHNATCTVRIAAVTRGGVGPFSDPVKIFIPAHGWVDYAPSSTPAPGNADPVLIIFGCFCGFILIGLILYISLAIRKRVQETKFGNAFTEEDSELVVNYIAKKSFCRRAIELTLHSLGVSEELQNKLEDVVIDRNLLILGKILGEGEFGSVMEGNLKQEDGTSLKVAVKTMKLDNSSQREIEEFLSEAACMKDFSHPNVIRLLGVCIEMSSQGIPKPMVILPFMKYGDLHTYLLYSRLETGPKHIPLQTLLKFMVDIALGMEYLSNRNFLHRDLAARNCMLRDDMTVCVADFGLSKKIYSGDYYRQGRIAKMPVKWIAIESLADRVYTSKSDVWAFGVTMWEIATRGMTPYPGVQNHEMYDYLLHGHRLKQPEDCLDELYEIMYSCWRTDPLDRPTFSVLRLQLEKLLESLPDVRNQADVIYVNTQLLESSEGLAQGSTLAPLDLNIDPDSIIASCTPRAAISVVTAEVHDSKPHEGRYILNGGSEEWEDLTSAPSAAVTAEKNSVLPGERLVRNGVSWSHSSMLPLGSSLPDELLFADDSSEGSEVLM</sequence>
<keyword id="KW-0002">3D-structure</keyword>
<keyword id="KW-0067">ATP-binding</keyword>
<keyword id="KW-1003">Cell membrane</keyword>
<keyword id="KW-0225">Disease variant</keyword>
<keyword id="KW-1015">Disulfide bond</keyword>
<keyword id="KW-0325">Glycoprotein</keyword>
<keyword id="KW-0393">Immunoglobulin domain</keyword>
<keyword id="KW-0418">Kinase</keyword>
<keyword id="KW-0472">Membrane</keyword>
<keyword id="KW-0547">Nucleotide-binding</keyword>
<keyword id="KW-0597">Phosphoprotein</keyword>
<keyword id="KW-1267">Proteomics identification</keyword>
<keyword id="KW-0656">Proto-oncogene</keyword>
<keyword id="KW-0675">Receptor</keyword>
<keyword id="KW-1185">Reference proteome</keyword>
<keyword id="KW-0677">Repeat</keyword>
<keyword id="KW-0682">Retinitis pigmentosa</keyword>
<keyword id="KW-0732">Signal</keyword>
<keyword id="KW-0808">Transferase</keyword>
<keyword id="KW-0812">Transmembrane</keyword>
<keyword id="KW-1133">Transmembrane helix</keyword>
<keyword id="KW-0829">Tyrosine-protein kinase</keyword>
<name>MERTK_HUMAN</name>
<evidence type="ECO:0000250" key="1"/>
<evidence type="ECO:0000250" key="2">
    <source>
        <dbReference type="UniProtKB" id="Q60805"/>
    </source>
</evidence>
<evidence type="ECO:0000255" key="3"/>
<evidence type="ECO:0000255" key="4">
    <source>
        <dbReference type="PROSITE-ProRule" id="PRU00114"/>
    </source>
</evidence>
<evidence type="ECO:0000255" key="5">
    <source>
        <dbReference type="PROSITE-ProRule" id="PRU00159"/>
    </source>
</evidence>
<evidence type="ECO:0000255" key="6">
    <source>
        <dbReference type="PROSITE-ProRule" id="PRU00316"/>
    </source>
</evidence>
<evidence type="ECO:0000255" key="7">
    <source>
        <dbReference type="PROSITE-ProRule" id="PRU10028"/>
    </source>
</evidence>
<evidence type="ECO:0000269" key="8">
    <source>
    </source>
</evidence>
<evidence type="ECO:0000269" key="9">
    <source>
    </source>
</evidence>
<evidence type="ECO:0000269" key="10">
    <source>
    </source>
</evidence>
<evidence type="ECO:0000269" key="11">
    <source>
    </source>
</evidence>
<evidence type="ECO:0000269" key="12">
    <source>
    </source>
</evidence>
<evidence type="ECO:0000269" key="13">
    <source>
    </source>
</evidence>
<evidence type="ECO:0000269" key="14">
    <source>
    </source>
</evidence>
<evidence type="ECO:0000269" key="15">
    <source>
    </source>
</evidence>
<evidence type="ECO:0000269" key="16">
    <source>
    </source>
</evidence>
<evidence type="ECO:0000269" key="17">
    <source>
    </source>
</evidence>
<evidence type="ECO:0000269" key="18">
    <source>
    </source>
</evidence>
<evidence type="ECO:0000269" key="19">
    <source>
    </source>
</evidence>
<evidence type="ECO:0000305" key="20"/>
<evidence type="ECO:0007744" key="21">
    <source>
    </source>
</evidence>
<evidence type="ECO:0007829" key="22">
    <source>
        <dbReference type="PDB" id="2DBJ"/>
    </source>
</evidence>
<evidence type="ECO:0007829" key="23">
    <source>
        <dbReference type="PDB" id="7AAZ"/>
    </source>
</evidence>
<evidence type="ECO:0007829" key="24">
    <source>
        <dbReference type="PDB" id="7AB0"/>
    </source>
</evidence>
<evidence type="ECO:0007829" key="25">
    <source>
        <dbReference type="PDB" id="7AVX"/>
    </source>
</evidence>
<evidence type="ECO:0007829" key="26">
    <source>
        <dbReference type="PDB" id="7M5Z"/>
    </source>
</evidence>
<evidence type="ECO:0007829" key="27">
    <source>
        <dbReference type="PDB" id="7OLS"/>
    </source>
</evidence>
<reference key="1">
    <citation type="journal article" date="1994" name="Cell Growth Differ.">
        <title>Cloning and mRNA expression analysis of a novel human protooncogene, c-mer.</title>
        <authorList>
            <person name="Graham D.K."/>
            <person name="Dawson T.L."/>
            <person name="Mullaney D.L."/>
            <person name="Snodgrass H.R."/>
            <person name="Earp H.S."/>
        </authorList>
    </citation>
    <scope>NUCLEOTIDE SEQUENCE [MRNA]</scope>
    <scope>VARIANT ASN-118</scope>
    <source>
        <tissue>Peripheral blood leukocyte</tissue>
    </source>
</reference>
<reference key="2">
    <citation type="journal article" date="1994" name="Cell Growth Differ.">
        <authorList>
            <person name="Graham D.K."/>
            <person name="Dawson T.L."/>
            <person name="Mullaney D.L."/>
            <person name="Snodgrass H.R."/>
            <person name="Earp H.S."/>
        </authorList>
    </citation>
    <scope>ERRATUM OF PUBMED:8086340</scope>
</reference>
<reference key="3">
    <citation type="journal article" date="2000" name="Nat. Genet.">
        <title>Mutations in MERTK, the human orthologue of the RCS rat retinal dystrophy gene, cause retinitis pigmentosa.</title>
        <authorList>
            <person name="Gal A."/>
            <person name="Li Y."/>
            <person name="Thompson D.A."/>
            <person name="Weir J."/>
            <person name="Orth U."/>
            <person name="Jacobson S.G."/>
            <person name="Apfelstedt-Sylla E."/>
            <person name="Vollrath D."/>
        </authorList>
    </citation>
    <scope>NUCLEOTIDE SEQUENCE [GENOMIC DNA] OF 22-999</scope>
    <scope>VARIANTS RP38 LYS-540; CYS-661 AND THR-871</scope>
    <scope>VARIANTS SER-20; ASN-118; THR-282; HIS-293; LYS-466; SER-498; VAL-518 AND VAL-871</scope>
</reference>
<reference key="4">
    <citation type="journal article" date="2005" name="Nature">
        <title>Generation and annotation of the DNA sequences of human chromosomes 2 and 4.</title>
        <authorList>
            <person name="Hillier L.W."/>
            <person name="Graves T.A."/>
            <person name="Fulton R.S."/>
            <person name="Fulton L.A."/>
            <person name="Pepin K.H."/>
            <person name="Minx P."/>
            <person name="Wagner-McPherson C."/>
            <person name="Layman D."/>
            <person name="Wylie K."/>
            <person name="Sekhon M."/>
            <person name="Becker M.C."/>
            <person name="Fewell G.A."/>
            <person name="Delehaunty K.D."/>
            <person name="Miner T.L."/>
            <person name="Nash W.E."/>
            <person name="Kremitzki C."/>
            <person name="Oddy L."/>
            <person name="Du H."/>
            <person name="Sun H."/>
            <person name="Bradshaw-Cordum H."/>
            <person name="Ali J."/>
            <person name="Carter J."/>
            <person name="Cordes M."/>
            <person name="Harris A."/>
            <person name="Isak A."/>
            <person name="van Brunt A."/>
            <person name="Nguyen C."/>
            <person name="Du F."/>
            <person name="Courtney L."/>
            <person name="Kalicki J."/>
            <person name="Ozersky P."/>
            <person name="Abbott S."/>
            <person name="Armstrong J."/>
            <person name="Belter E.A."/>
            <person name="Caruso L."/>
            <person name="Cedroni M."/>
            <person name="Cotton M."/>
            <person name="Davidson T."/>
            <person name="Desai A."/>
            <person name="Elliott G."/>
            <person name="Erb T."/>
            <person name="Fronick C."/>
            <person name="Gaige T."/>
            <person name="Haakenson W."/>
            <person name="Haglund K."/>
            <person name="Holmes A."/>
            <person name="Harkins R."/>
            <person name="Kim K."/>
            <person name="Kruchowski S.S."/>
            <person name="Strong C.M."/>
            <person name="Grewal N."/>
            <person name="Goyea E."/>
            <person name="Hou S."/>
            <person name="Levy A."/>
            <person name="Martinka S."/>
            <person name="Mead K."/>
            <person name="McLellan M.D."/>
            <person name="Meyer R."/>
            <person name="Randall-Maher J."/>
            <person name="Tomlinson C."/>
            <person name="Dauphin-Kohlberg S."/>
            <person name="Kozlowicz-Reilly A."/>
            <person name="Shah N."/>
            <person name="Swearengen-Shahid S."/>
            <person name="Snider J."/>
            <person name="Strong J.T."/>
            <person name="Thompson J."/>
            <person name="Yoakum M."/>
            <person name="Leonard S."/>
            <person name="Pearman C."/>
            <person name="Trani L."/>
            <person name="Radionenko M."/>
            <person name="Waligorski J.E."/>
            <person name="Wang C."/>
            <person name="Rock S.M."/>
            <person name="Tin-Wollam A.-M."/>
            <person name="Maupin R."/>
            <person name="Latreille P."/>
            <person name="Wendl M.C."/>
            <person name="Yang S.-P."/>
            <person name="Pohl C."/>
            <person name="Wallis J.W."/>
            <person name="Spieth J."/>
            <person name="Bieri T.A."/>
            <person name="Berkowicz N."/>
            <person name="Nelson J.O."/>
            <person name="Osborne J."/>
            <person name="Ding L."/>
            <person name="Meyer R."/>
            <person name="Sabo A."/>
            <person name="Shotland Y."/>
            <person name="Sinha P."/>
            <person name="Wohldmann P.E."/>
            <person name="Cook L.L."/>
            <person name="Hickenbotham M.T."/>
            <person name="Eldred J."/>
            <person name="Williams D."/>
            <person name="Jones T.A."/>
            <person name="She X."/>
            <person name="Ciccarelli F.D."/>
            <person name="Izaurralde E."/>
            <person name="Taylor J."/>
            <person name="Schmutz J."/>
            <person name="Myers R.M."/>
            <person name="Cox D.R."/>
            <person name="Huang X."/>
            <person name="McPherson J.D."/>
            <person name="Mardis E.R."/>
            <person name="Clifton S.W."/>
            <person name="Warren W.C."/>
            <person name="Chinwalla A.T."/>
            <person name="Eddy S.R."/>
            <person name="Marra M.A."/>
            <person name="Ovcharenko I."/>
            <person name="Furey T.S."/>
            <person name="Miller W."/>
            <person name="Eichler E.E."/>
            <person name="Bork P."/>
            <person name="Suyama M."/>
            <person name="Torrents D."/>
            <person name="Waterston R.H."/>
            <person name="Wilson R.K."/>
        </authorList>
    </citation>
    <scope>NUCLEOTIDE SEQUENCE [LARGE SCALE GENOMIC DNA]</scope>
</reference>
<reference key="5">
    <citation type="journal article" date="1996" name="J. Biol. Chem.">
        <title>Identification of the major autophosphorylation sites of Nyk/Mer, an NCAM-related receptor tyrosine kinase.</title>
        <authorList>
            <person name="Ling L."/>
            <person name="Templeton D."/>
            <person name="Kung H.J."/>
        </authorList>
    </citation>
    <scope>PHOSPHORYLATION AT TYR-749; TYR-753 AND TYR-754</scope>
</reference>
<reference key="6">
    <citation type="journal article" date="1997" name="Oncogene">
        <title>Identification of Gas6 as a ligand for Mer, a neural cell adhesion molecule related receptor tyrosine kinase implicated in cellular transformation.</title>
        <authorList>
            <person name="Chen J."/>
            <person name="Carey K."/>
            <person name="Godowski P.J."/>
        </authorList>
    </citation>
    <scope>INTERACTION WITH GAS6</scope>
</reference>
<reference key="7">
    <citation type="journal article" date="2003" name="J. Biol. Chem.">
        <title>An SH2 domain-dependent, phosphotyrosine-independent interaction between Vav1 and the Mer receptor tyrosine kinase: a mechanism for localizing guanine nucleotide-exchange factor action.</title>
        <authorList>
            <person name="Mahajan N.P."/>
            <person name="Earp H.S."/>
        </authorList>
    </citation>
    <scope>INTERACTION WITH VAV1</scope>
</reference>
<reference key="8">
    <citation type="journal article" date="2005" name="Cancer Res.">
        <title>Activated tyrosine kinase Ack1 promotes prostate tumorigenesis: role of Ack1 in polyubiquitination of tumor suppressor Wwox.</title>
        <authorList>
            <person name="Mahajan N.P."/>
            <person name="Whang Y.E."/>
            <person name="Mohler J.L."/>
            <person name="Earp H.S."/>
        </authorList>
    </citation>
    <scope>INTERACTION WITH TNK2</scope>
</reference>
<reference key="9">
    <citation type="journal article" date="2005" name="J. Proteome Res.">
        <title>Human plasma N-glycoproteome analysis by immunoaffinity subtraction, hydrazide chemistry, and mass spectrometry.</title>
        <authorList>
            <person name="Liu T."/>
            <person name="Qian W.-J."/>
            <person name="Gritsenko M.A."/>
            <person name="Camp D.G. II"/>
            <person name="Monroe M.E."/>
            <person name="Moore R.J."/>
            <person name="Smith R.D."/>
        </authorList>
    </citation>
    <scope>GLYCOSYLATION [LARGE SCALE ANALYSIS] AT ASN-442</scope>
    <source>
        <tissue>Plasma</tissue>
    </source>
</reference>
<reference key="10">
    <citation type="journal article" date="2006" name="Cytokine Growth Factor Rev.">
        <title>Signalling and functional diversity within the Axl subfamily of receptor tyrosine kinases.</title>
        <authorList>
            <person name="Hafizi S."/>
            <person name="Dahlback B."/>
        </authorList>
    </citation>
    <scope>REVIEW ON FUNCTION</scope>
</reference>
<reference key="11">
    <citation type="journal article" date="2006" name="J. Virol.">
        <title>Tyro3 family-mediated cell entry of Ebola and Marburg viruses.</title>
        <authorList>
            <person name="Shimojima M."/>
            <person name="Takada A."/>
            <person name="Ebihara H."/>
            <person name="Neumann G."/>
            <person name="Fujioka K."/>
            <person name="Irimura T."/>
            <person name="Jones S."/>
            <person name="Feldmann H."/>
            <person name="Kawaoka Y."/>
        </authorList>
    </citation>
    <scope>FUNCTION AS CELL ENTRY FACTOR IN FILOVIRUS INFECTION</scope>
</reference>
<reference key="12">
    <citation type="journal article" date="2008" name="Nat. Rev. Immunol.">
        <title>Immunobiology of the TAM receptors.</title>
        <authorList>
            <person name="Lemke G."/>
            <person name="Rothlin C.V."/>
        </authorList>
    </citation>
    <scope>REVIEW ON FUNCTION</scope>
</reference>
<reference key="13">
    <citation type="journal article" date="2009" name="Mol. Cell. Proteomics">
        <title>Large-scale proteomics analysis of the human kinome.</title>
        <authorList>
            <person name="Oppermann F.S."/>
            <person name="Gnad F."/>
            <person name="Olsen J.V."/>
            <person name="Hornberger R."/>
            <person name="Greff Z."/>
            <person name="Keri G."/>
            <person name="Mann M."/>
            <person name="Daub H."/>
        </authorList>
    </citation>
    <scope>PHOSPHORYLATION [LARGE SCALE ANALYSIS] AT SER-543 AND SER-935</scope>
    <scope>IDENTIFICATION BY MASS SPECTROMETRY [LARGE SCALE ANALYSIS]</scope>
</reference>
<reference key="14">
    <citation type="journal article" date="2012" name="J. Cell. Physiol.">
        <title>Galectin-3 is a new MerTK-specific eat-me signal.</title>
        <authorList>
            <person name="Caberoy N.B."/>
            <person name="Alvarado G."/>
            <person name="Bigcas J.L."/>
            <person name="Li W."/>
        </authorList>
    </citation>
    <scope>INTERACTION WITH LGALS3</scope>
</reference>
<reference key="15">
    <citation type="journal article" date="2020" name="Cells">
        <title>Mertk Interacts with Tim-4 to Enhance Tim-4-Mediated Efferocytosis.</title>
        <authorList>
            <person name="Moon B."/>
            <person name="Lee J."/>
            <person name="Lee S.A."/>
            <person name="Min C."/>
            <person name="Moon H."/>
            <person name="Kim D."/>
            <person name="Yang S."/>
            <person name="Moon H."/>
            <person name="Jeon J."/>
            <person name="Joo Y.E."/>
            <person name="Park D."/>
        </authorList>
    </citation>
    <scope>FUNCTION</scope>
    <scope>INTERACTION WITH TIMD4</scope>
    <scope>SUBCELLULAR LOCATION</scope>
</reference>
<reference key="16">
    <citation type="submission" date="2006-12" db="PDB data bank">
        <title>Solution structures of the FN3 domain of human proto-oncogene tyrosine-protein kinase MER precursor.</title>
        <authorList>
            <consortium name="RIKEN structural genomics initiative (RSGI)"/>
        </authorList>
    </citation>
    <scope>STRUCTURE BY NMR OF 366-483</scope>
</reference>
<reference key="17">
    <citation type="journal article" date="2007" name="Nature">
        <title>Patterns of somatic mutation in human cancer genomes.</title>
        <authorList>
            <person name="Greenman C."/>
            <person name="Stephens P."/>
            <person name="Smith R."/>
            <person name="Dalgliesh G.L."/>
            <person name="Hunter C."/>
            <person name="Bignell G."/>
            <person name="Davies H."/>
            <person name="Teague J."/>
            <person name="Butler A."/>
            <person name="Stevens C."/>
            <person name="Edkins S."/>
            <person name="O'Meara S."/>
            <person name="Vastrik I."/>
            <person name="Schmidt E.E."/>
            <person name="Avis T."/>
            <person name="Barthorpe S."/>
            <person name="Bhamra G."/>
            <person name="Buck G."/>
            <person name="Choudhury B."/>
            <person name="Clements J."/>
            <person name="Cole J."/>
            <person name="Dicks E."/>
            <person name="Forbes S."/>
            <person name="Gray K."/>
            <person name="Halliday K."/>
            <person name="Harrison R."/>
            <person name="Hills K."/>
            <person name="Hinton J."/>
            <person name="Jenkinson A."/>
            <person name="Jones D."/>
            <person name="Menzies A."/>
            <person name="Mironenko T."/>
            <person name="Perry J."/>
            <person name="Raine K."/>
            <person name="Richardson D."/>
            <person name="Shepherd R."/>
            <person name="Small A."/>
            <person name="Tofts C."/>
            <person name="Varian J."/>
            <person name="Webb T."/>
            <person name="West S."/>
            <person name="Widaa S."/>
            <person name="Yates A."/>
            <person name="Cahill D.P."/>
            <person name="Louis D.N."/>
            <person name="Goldstraw P."/>
            <person name="Nicholson A.G."/>
            <person name="Brasseur F."/>
            <person name="Looijenga L."/>
            <person name="Weber B.L."/>
            <person name="Chiew Y.-E."/>
            <person name="DeFazio A."/>
            <person name="Greaves M.F."/>
            <person name="Green A.R."/>
            <person name="Campbell P."/>
            <person name="Birney E."/>
            <person name="Easton D.F."/>
            <person name="Chenevix-Trench G."/>
            <person name="Tan M.-H."/>
            <person name="Khoo S.K."/>
            <person name="Teh B.T."/>
            <person name="Yuen S.T."/>
            <person name="Leung S.Y."/>
            <person name="Wooster R."/>
            <person name="Futreal P.A."/>
            <person name="Stratton M.R."/>
        </authorList>
    </citation>
    <scope>VARIANTS [LARGE SCALE ANALYSIS] SER-20; ASN-118; MET-185; THR-282; LYS-289; HIS-293; GLY-446; LEU-452; LYS-466; SER-498; VAL-518; GLU-662; SER-708; GLN-823; TRP-865 AND ILE-870</scope>
</reference>
<reference key="18">
    <citation type="journal article" date="2011" name="PLoS ONE">
        <title>Detection of variants in 15 genes in 87 unrelated Chinese patients with Leber congenital amaurosis.</title>
        <authorList>
            <person name="Li L."/>
            <person name="Xiao X."/>
            <person name="Li S."/>
            <person name="Jia X."/>
            <person name="Wang P."/>
            <person name="Guo X."/>
            <person name="Jiao X."/>
            <person name="Zhang Q."/>
            <person name="Hejtmancik J.F."/>
        </authorList>
    </citation>
    <scope>VARIANTS VAL-214 AND LEU-958</scope>
</reference>
<protein>
    <recommendedName>
        <fullName>Tyrosine-protein kinase Mer</fullName>
        <ecNumber>2.7.10.1</ecNumber>
    </recommendedName>
    <alternativeName>
        <fullName>Proto-oncogene c-Mer</fullName>
    </alternativeName>
    <alternativeName>
        <fullName>Receptor tyrosine kinase MerTK</fullName>
    </alternativeName>
</protein>
<proteinExistence type="evidence at protein level"/>